<proteinExistence type="inferred from homology"/>
<dbReference type="EC" id="6.1.1.7" evidence="1"/>
<dbReference type="EMBL" id="AF179611">
    <property type="protein sequence ID" value="AAD53924.1"/>
    <property type="molecule type" value="Genomic_DNA"/>
</dbReference>
<dbReference type="EMBL" id="AE008692">
    <property type="protein sequence ID" value="AAV89469.2"/>
    <property type="molecule type" value="Genomic_DNA"/>
</dbReference>
<dbReference type="RefSeq" id="WP_011240713.1">
    <property type="nucleotide sequence ID" value="NZ_CP035711.1"/>
</dbReference>
<dbReference type="SMR" id="Q9RNN8"/>
<dbReference type="STRING" id="264203.ZMO0845"/>
<dbReference type="KEGG" id="zmo:ZMO0845"/>
<dbReference type="eggNOG" id="COG0013">
    <property type="taxonomic scope" value="Bacteria"/>
</dbReference>
<dbReference type="HOGENOM" id="CLU_004485_1_1_5"/>
<dbReference type="Proteomes" id="UP000001173">
    <property type="component" value="Chromosome"/>
</dbReference>
<dbReference type="GO" id="GO:0005829">
    <property type="term" value="C:cytosol"/>
    <property type="evidence" value="ECO:0007669"/>
    <property type="project" value="TreeGrafter"/>
</dbReference>
<dbReference type="GO" id="GO:0004813">
    <property type="term" value="F:alanine-tRNA ligase activity"/>
    <property type="evidence" value="ECO:0007669"/>
    <property type="project" value="UniProtKB-UniRule"/>
</dbReference>
<dbReference type="GO" id="GO:0002161">
    <property type="term" value="F:aminoacyl-tRNA deacylase activity"/>
    <property type="evidence" value="ECO:0007669"/>
    <property type="project" value="TreeGrafter"/>
</dbReference>
<dbReference type="GO" id="GO:0005524">
    <property type="term" value="F:ATP binding"/>
    <property type="evidence" value="ECO:0007669"/>
    <property type="project" value="UniProtKB-UniRule"/>
</dbReference>
<dbReference type="GO" id="GO:0000049">
    <property type="term" value="F:tRNA binding"/>
    <property type="evidence" value="ECO:0007669"/>
    <property type="project" value="UniProtKB-KW"/>
</dbReference>
<dbReference type="GO" id="GO:0008270">
    <property type="term" value="F:zinc ion binding"/>
    <property type="evidence" value="ECO:0007669"/>
    <property type="project" value="UniProtKB-UniRule"/>
</dbReference>
<dbReference type="GO" id="GO:0006419">
    <property type="term" value="P:alanyl-tRNA aminoacylation"/>
    <property type="evidence" value="ECO:0007669"/>
    <property type="project" value="UniProtKB-UniRule"/>
</dbReference>
<dbReference type="GO" id="GO:0045892">
    <property type="term" value="P:negative regulation of DNA-templated transcription"/>
    <property type="evidence" value="ECO:0007669"/>
    <property type="project" value="TreeGrafter"/>
</dbReference>
<dbReference type="CDD" id="cd00673">
    <property type="entry name" value="AlaRS_core"/>
    <property type="match status" value="1"/>
</dbReference>
<dbReference type="FunFam" id="3.10.310.40:FF:000001">
    <property type="entry name" value="Alanine--tRNA ligase"/>
    <property type="match status" value="1"/>
</dbReference>
<dbReference type="FunFam" id="3.30.54.20:FF:000001">
    <property type="entry name" value="Alanine--tRNA ligase"/>
    <property type="match status" value="1"/>
</dbReference>
<dbReference type="FunFam" id="3.30.930.10:FF:000004">
    <property type="entry name" value="Alanine--tRNA ligase"/>
    <property type="match status" value="1"/>
</dbReference>
<dbReference type="FunFam" id="3.30.980.10:FF:000004">
    <property type="entry name" value="Alanine--tRNA ligase, cytoplasmic"/>
    <property type="match status" value="1"/>
</dbReference>
<dbReference type="Gene3D" id="2.40.30.130">
    <property type="match status" value="1"/>
</dbReference>
<dbReference type="Gene3D" id="3.10.310.40">
    <property type="match status" value="1"/>
</dbReference>
<dbReference type="Gene3D" id="3.30.54.20">
    <property type="match status" value="1"/>
</dbReference>
<dbReference type="Gene3D" id="6.10.250.550">
    <property type="match status" value="1"/>
</dbReference>
<dbReference type="Gene3D" id="3.30.930.10">
    <property type="entry name" value="Bira Bifunctional Protein, Domain 2"/>
    <property type="match status" value="1"/>
</dbReference>
<dbReference type="Gene3D" id="3.30.980.10">
    <property type="entry name" value="Threonyl-trna Synthetase, Chain A, domain 2"/>
    <property type="match status" value="1"/>
</dbReference>
<dbReference type="HAMAP" id="MF_00036_B">
    <property type="entry name" value="Ala_tRNA_synth_B"/>
    <property type="match status" value="1"/>
</dbReference>
<dbReference type="InterPro" id="IPR045864">
    <property type="entry name" value="aa-tRNA-synth_II/BPL/LPL"/>
</dbReference>
<dbReference type="InterPro" id="IPR002318">
    <property type="entry name" value="Ala-tRNA-lgiase_IIc"/>
</dbReference>
<dbReference type="InterPro" id="IPR018162">
    <property type="entry name" value="Ala-tRNA-ligase_IIc_anticod-bd"/>
</dbReference>
<dbReference type="InterPro" id="IPR018165">
    <property type="entry name" value="Ala-tRNA-synth_IIc_core"/>
</dbReference>
<dbReference type="InterPro" id="IPR018164">
    <property type="entry name" value="Ala-tRNA-synth_IIc_N"/>
</dbReference>
<dbReference type="InterPro" id="IPR050058">
    <property type="entry name" value="Ala-tRNA_ligase"/>
</dbReference>
<dbReference type="InterPro" id="IPR023033">
    <property type="entry name" value="Ala_tRNA_ligase_euk/bac"/>
</dbReference>
<dbReference type="InterPro" id="IPR003156">
    <property type="entry name" value="DHHA1_dom"/>
</dbReference>
<dbReference type="InterPro" id="IPR018163">
    <property type="entry name" value="Thr/Ala-tRNA-synth_IIc_edit"/>
</dbReference>
<dbReference type="InterPro" id="IPR009000">
    <property type="entry name" value="Transl_B-barrel_sf"/>
</dbReference>
<dbReference type="InterPro" id="IPR012947">
    <property type="entry name" value="tRNA_SAD"/>
</dbReference>
<dbReference type="NCBIfam" id="TIGR00344">
    <property type="entry name" value="alaS"/>
    <property type="match status" value="1"/>
</dbReference>
<dbReference type="PANTHER" id="PTHR11777:SF9">
    <property type="entry name" value="ALANINE--TRNA LIGASE, CYTOPLASMIC"/>
    <property type="match status" value="1"/>
</dbReference>
<dbReference type="PANTHER" id="PTHR11777">
    <property type="entry name" value="ALANYL-TRNA SYNTHETASE"/>
    <property type="match status" value="1"/>
</dbReference>
<dbReference type="Pfam" id="PF02272">
    <property type="entry name" value="DHHA1"/>
    <property type="match status" value="1"/>
</dbReference>
<dbReference type="Pfam" id="PF01411">
    <property type="entry name" value="tRNA-synt_2c"/>
    <property type="match status" value="1"/>
</dbReference>
<dbReference type="Pfam" id="PF07973">
    <property type="entry name" value="tRNA_SAD"/>
    <property type="match status" value="1"/>
</dbReference>
<dbReference type="PRINTS" id="PR00980">
    <property type="entry name" value="TRNASYNTHALA"/>
</dbReference>
<dbReference type="SMART" id="SM00863">
    <property type="entry name" value="tRNA_SAD"/>
    <property type="match status" value="1"/>
</dbReference>
<dbReference type="SUPFAM" id="SSF55681">
    <property type="entry name" value="Class II aaRS and biotin synthetases"/>
    <property type="match status" value="1"/>
</dbReference>
<dbReference type="SUPFAM" id="SSF101353">
    <property type="entry name" value="Putative anticodon-binding domain of alanyl-tRNA synthetase (AlaRS)"/>
    <property type="match status" value="1"/>
</dbReference>
<dbReference type="SUPFAM" id="SSF55186">
    <property type="entry name" value="ThrRS/AlaRS common domain"/>
    <property type="match status" value="1"/>
</dbReference>
<dbReference type="SUPFAM" id="SSF50447">
    <property type="entry name" value="Translation proteins"/>
    <property type="match status" value="1"/>
</dbReference>
<dbReference type="PROSITE" id="PS50860">
    <property type="entry name" value="AA_TRNA_LIGASE_II_ALA"/>
    <property type="match status" value="1"/>
</dbReference>
<comment type="function">
    <text evidence="1">Catalyzes the attachment of alanine to tRNA(Ala) in a two-step reaction: alanine is first activated by ATP to form Ala-AMP and then transferred to the acceptor end of tRNA(Ala). Also edits incorrectly charged Ser-tRNA(Ala) and Gly-tRNA(Ala) via its editing domain.</text>
</comment>
<comment type="catalytic activity">
    <reaction evidence="1">
        <text>tRNA(Ala) + L-alanine + ATP = L-alanyl-tRNA(Ala) + AMP + diphosphate</text>
        <dbReference type="Rhea" id="RHEA:12540"/>
        <dbReference type="Rhea" id="RHEA-COMP:9657"/>
        <dbReference type="Rhea" id="RHEA-COMP:9923"/>
        <dbReference type="ChEBI" id="CHEBI:30616"/>
        <dbReference type="ChEBI" id="CHEBI:33019"/>
        <dbReference type="ChEBI" id="CHEBI:57972"/>
        <dbReference type="ChEBI" id="CHEBI:78442"/>
        <dbReference type="ChEBI" id="CHEBI:78497"/>
        <dbReference type="ChEBI" id="CHEBI:456215"/>
        <dbReference type="EC" id="6.1.1.7"/>
    </reaction>
</comment>
<comment type="cofactor">
    <cofactor evidence="1">
        <name>Zn(2+)</name>
        <dbReference type="ChEBI" id="CHEBI:29105"/>
    </cofactor>
    <text evidence="1">Binds 1 zinc ion per subunit.</text>
</comment>
<comment type="subcellular location">
    <subcellularLocation>
        <location evidence="1">Cytoplasm</location>
    </subcellularLocation>
</comment>
<comment type="domain">
    <text evidence="1">Consists of three domains; the N-terminal catalytic domain, the editing domain and the C-terminal C-Ala domain. The editing domain removes incorrectly charged amino acids, while the C-Ala domain, along with tRNA(Ala), serves as a bridge to cooperatively bring together the editing and aminoacylation centers thus stimulating deacylation of misacylated tRNAs.</text>
</comment>
<comment type="similarity">
    <text evidence="1">Belongs to the class-II aminoacyl-tRNA synthetase family.</text>
</comment>
<keyword id="KW-0030">Aminoacyl-tRNA synthetase</keyword>
<keyword id="KW-0067">ATP-binding</keyword>
<keyword id="KW-0963">Cytoplasm</keyword>
<keyword id="KW-0436">Ligase</keyword>
<keyword id="KW-0479">Metal-binding</keyword>
<keyword id="KW-0547">Nucleotide-binding</keyword>
<keyword id="KW-0648">Protein biosynthesis</keyword>
<keyword id="KW-1185">Reference proteome</keyword>
<keyword id="KW-0694">RNA-binding</keyword>
<keyword id="KW-0820">tRNA-binding</keyword>
<keyword id="KW-0862">Zinc</keyword>
<gene>
    <name evidence="1" type="primary">alaS</name>
    <name type="ordered locus">ZMO0845</name>
</gene>
<evidence type="ECO:0000255" key="1">
    <source>
        <dbReference type="HAMAP-Rule" id="MF_00036"/>
    </source>
</evidence>
<evidence type="ECO:0000305" key="2"/>
<protein>
    <recommendedName>
        <fullName evidence="1">Alanine--tRNA ligase</fullName>
        <ecNumber evidence="1">6.1.1.7</ecNumber>
    </recommendedName>
    <alternativeName>
        <fullName evidence="1">Alanyl-tRNA synthetase</fullName>
        <shortName evidence="1">AlaRS</shortName>
    </alternativeName>
</protein>
<organism>
    <name type="scientific">Zymomonas mobilis subsp. mobilis (strain ATCC 31821 / ZM4 / CP4)</name>
    <dbReference type="NCBI Taxonomy" id="264203"/>
    <lineage>
        <taxon>Bacteria</taxon>
        <taxon>Pseudomonadati</taxon>
        <taxon>Pseudomonadota</taxon>
        <taxon>Alphaproteobacteria</taxon>
        <taxon>Sphingomonadales</taxon>
        <taxon>Zymomonadaceae</taxon>
        <taxon>Zymomonas</taxon>
    </lineage>
</organism>
<reference key="1">
    <citation type="submission" date="1999-08" db="EMBL/GenBank/DDBJ databases">
        <authorList>
            <person name="Um H.W."/>
            <person name="Kang H.S."/>
        </authorList>
    </citation>
    <scope>NUCLEOTIDE SEQUENCE [GENOMIC DNA]</scope>
    <source>
        <strain>ATCC 31821 / ZM4 / CP4</strain>
    </source>
</reference>
<reference key="2">
    <citation type="journal article" date="2005" name="Nat. Biotechnol.">
        <title>The genome sequence of the ethanologenic bacterium Zymomonas mobilis ZM4.</title>
        <authorList>
            <person name="Seo J.-S."/>
            <person name="Chong H."/>
            <person name="Park H.S."/>
            <person name="Yoon K.-O."/>
            <person name="Jung C."/>
            <person name="Kim J.J."/>
            <person name="Hong J.H."/>
            <person name="Kim H."/>
            <person name="Kim J.-H."/>
            <person name="Kil J.-I."/>
            <person name="Park C.J."/>
            <person name="Oh H.-M."/>
            <person name="Lee J.-S."/>
            <person name="Jin S.-J."/>
            <person name="Um H.-W."/>
            <person name="Lee H.-J."/>
            <person name="Oh S.-J."/>
            <person name="Kim J.Y."/>
            <person name="Kang H.L."/>
            <person name="Lee S.Y."/>
            <person name="Lee K.J."/>
            <person name="Kang H.S."/>
        </authorList>
    </citation>
    <scope>NUCLEOTIDE SEQUENCE [LARGE SCALE GENOMIC DNA]</scope>
    <source>
        <strain>ATCC 31821 / ZM4 / CP4</strain>
    </source>
</reference>
<reference key="3">
    <citation type="journal article" date="2009" name="Nat. Biotechnol.">
        <title>Improved genome annotation for Zymomonas mobilis.</title>
        <authorList>
            <person name="Yang S."/>
            <person name="Pappas K.M."/>
            <person name="Hauser L.J."/>
            <person name="Land M.L."/>
            <person name="Chen G.L."/>
            <person name="Hurst G.B."/>
            <person name="Pan C."/>
            <person name="Kouvelis V.N."/>
            <person name="Typas M.A."/>
            <person name="Pelletier D.A."/>
            <person name="Klingeman D.M."/>
            <person name="Chang Y.J."/>
            <person name="Samatova N.F."/>
            <person name="Brown S.D."/>
        </authorList>
    </citation>
    <scope>SEQUENCE REVISION</scope>
</reference>
<name>SYA_ZYMMO</name>
<feature type="chain" id="PRO_0000075258" description="Alanine--tRNA ligase">
    <location>
        <begin position="1"/>
        <end position="890"/>
    </location>
</feature>
<feature type="binding site" evidence="1">
    <location>
        <position position="565"/>
    </location>
    <ligand>
        <name>Zn(2+)</name>
        <dbReference type="ChEBI" id="CHEBI:29105"/>
    </ligand>
</feature>
<feature type="binding site" evidence="1">
    <location>
        <position position="569"/>
    </location>
    <ligand>
        <name>Zn(2+)</name>
        <dbReference type="ChEBI" id="CHEBI:29105"/>
    </ligand>
</feature>
<feature type="binding site" evidence="1">
    <location>
        <position position="677"/>
    </location>
    <ligand>
        <name>Zn(2+)</name>
        <dbReference type="ChEBI" id="CHEBI:29105"/>
    </ligand>
</feature>
<feature type="binding site" evidence="1">
    <location>
        <position position="681"/>
    </location>
    <ligand>
        <name>Zn(2+)</name>
        <dbReference type="ChEBI" id="CHEBI:29105"/>
    </ligand>
</feature>
<feature type="sequence conflict" description="In Ref. 1; AAD53924." evidence="2" ref="1">
    <original>LEYFEKNGHRIVPS</original>
    <variation>SRIFRKEWPSDSTI</variation>
    <location>
        <begin position="12"/>
        <end position="25"/>
    </location>
</feature>
<feature type="sequence conflict" description="In Ref. 1; AAD53924." evidence="2" ref="1">
    <original>GPPGSP</original>
    <variation>ASGLA</variation>
    <location>
        <begin position="186"/>
        <end position="191"/>
    </location>
</feature>
<feature type="sequence conflict" description="In Ref. 1; AAD53924." evidence="2" ref="1">
    <original>E</original>
    <variation>K</variation>
    <location>
        <position position="371"/>
    </location>
</feature>
<feature type="sequence conflict" description="In Ref. 1; AAD53924." evidence="2" ref="1">
    <original>SERA</original>
    <variation>CQRS</variation>
    <location>
        <begin position="753"/>
        <end position="756"/>
    </location>
</feature>
<feature type="sequence conflict" description="In Ref. 1; AAD53924." evidence="2" ref="1">
    <location>
        <position position="760"/>
    </location>
</feature>
<feature type="sequence conflict" description="In Ref. 1; AAD53924." evidence="2" ref="1">
    <original>L</original>
    <variation>F</variation>
    <location>
        <position position="766"/>
    </location>
</feature>
<feature type="sequence conflict" description="In Ref. 1; AAD53924." evidence="2" ref="1">
    <original>G</original>
    <variation>C</variation>
    <location>
        <position position="771"/>
    </location>
</feature>
<feature type="sequence conflict" description="In Ref. 1; AAD53924." evidence="2" ref="1">
    <original>EKV</original>
    <variation>DKL</variation>
    <location>
        <begin position="781"/>
        <end position="783"/>
    </location>
</feature>
<feature type="sequence conflict" description="In Ref. 1; AAD53924." evidence="2" ref="1">
    <original>Q</original>
    <variation>H</variation>
    <location>
        <position position="787"/>
    </location>
</feature>
<feature type="sequence conflict" description="In Ref. 1; AAD53924." evidence="2" ref="1">
    <original>D</original>
    <variation>E</variation>
    <location>
        <position position="797"/>
    </location>
</feature>
<feature type="sequence conflict" description="In Ref. 1; AAD53924." evidence="2" ref="1">
    <original>R</original>
    <variation>L</variation>
    <location>
        <position position="802"/>
    </location>
</feature>
<feature type="sequence conflict" description="In Ref. 1; AAD53924." evidence="2" ref="1">
    <original>D</original>
    <variation>G</variation>
    <location>
        <position position="839"/>
    </location>
</feature>
<sequence>MITTNEIRRSFLEYFEKNGHRIVPSAPLVPQNDPTLMFVNAGMVPFKNTFTGLESRPYKTATSSQKCVRAGGKHNDLDNVGYTARHHTFFEMLGNFSFGDYFKERVIELAWGLITKEWGLDPERLCVTVYHTDEEAFNLWRKIAGLPEDRIIKIATSDNFWSMGDTGPCGPCSEIFYDHGPEIPGGPPGSPDEDGDRFVEIWNLVFMQYEQVNAETRLNLPRPSIDTGMGLERIASVLQGVHDNYDTDTFKALIAASGELTHTATDGQFKASHRVIADHLRAAGFLVADGVLPANEGRGYVLRRIMRRAMRHAHLIGAKEPLMYRLVPALLSEMGMAYPELVRAKALIEETLRLEETRFRQTLANGLKILEDETQHLKSGDTLPGAVAFRLYDTYGFPYDLTADALRARNLTVDQAGFDAAMAEQRKAARAAWKGSGEKASDEIWFDIADQLGGTEFTGYTAEKGSGQIIALIKDGKRVETAKQGDDITIITNQTPFYGESGGQKGDIGVITGNNDLKMTVTDTQKPLGRIHAHIAKIEKGEIKIGDDIQLQVDINHRNRLRANHSATHLLHAALRDQLGQHVSQKGSMVSAERLRFDFSHQKALSDQELAAIEAEVNQQILNNSVVTTRLMTPESAVEAGAMALFGEKYGNEVRVLSMGSCLNDQNEESSWSVELCGGTHVSALGQIGLFHIVSETAVSSGIRRIEAVTGEEARLWLVGRDRLLRETASILKAVPEEVPTRTAAILDERRKSERALADAQKALALANANGGQGGNNAAPEKVGAYQFIGQVIEGLDPKALRGLIDENKKIIESGVIALITVNEGRASVAIGVSDSLKDKISAVDLVRKAVETLGGKGGGGRPDMAQGGGPNGNEAAQALEAVKALLEKA</sequence>
<accession>Q9RNN8</accession>
<accession>Q5NP91</accession>